<gene>
    <name type="primary">aptx</name>
</gene>
<evidence type="ECO:0000250" key="1"/>
<evidence type="ECO:0000250" key="2">
    <source>
        <dbReference type="UniProtKB" id="O74859"/>
    </source>
</evidence>
<evidence type="ECO:0000250" key="3">
    <source>
        <dbReference type="UniProtKB" id="Q7Z2E3"/>
    </source>
</evidence>
<evidence type="ECO:0000255" key="4">
    <source>
        <dbReference type="PROSITE-ProRule" id="PRU00042"/>
    </source>
</evidence>
<evidence type="ECO:0000255" key="5">
    <source>
        <dbReference type="PROSITE-ProRule" id="PRU00464"/>
    </source>
</evidence>
<evidence type="ECO:0000256" key="6">
    <source>
        <dbReference type="SAM" id="MobiDB-lite"/>
    </source>
</evidence>
<accession>P61799</accession>
<dbReference type="EC" id="3.6.1.71" evidence="3"/>
<dbReference type="EC" id="3.6.1.72" evidence="2"/>
<dbReference type="EMBL" id="AY219903">
    <property type="protein sequence ID" value="AAP45147.1"/>
    <property type="molecule type" value="mRNA"/>
</dbReference>
<dbReference type="RefSeq" id="NP_999894.1">
    <property type="nucleotide sequence ID" value="NM_214729.1"/>
</dbReference>
<dbReference type="SMR" id="P61799"/>
<dbReference type="FunCoup" id="P61799">
    <property type="interactions" value="1106"/>
</dbReference>
<dbReference type="STRING" id="7955.ENSDARP00000035368"/>
<dbReference type="PaxDb" id="7955-ENSDARP00000035368"/>
<dbReference type="GeneID" id="405797"/>
<dbReference type="KEGG" id="dre:405797"/>
<dbReference type="AGR" id="ZFIN:ZDB-GENE-040628-2"/>
<dbReference type="CTD" id="54840"/>
<dbReference type="ZFIN" id="ZDB-GENE-040628-2">
    <property type="gene designation" value="aptx"/>
</dbReference>
<dbReference type="eggNOG" id="KOG0562">
    <property type="taxonomic scope" value="Eukaryota"/>
</dbReference>
<dbReference type="eggNOG" id="KOG2134">
    <property type="taxonomic scope" value="Eukaryota"/>
</dbReference>
<dbReference type="InParanoid" id="P61799"/>
<dbReference type="OrthoDB" id="3512845at2759"/>
<dbReference type="PhylomeDB" id="P61799"/>
<dbReference type="PRO" id="PR:P61799"/>
<dbReference type="Proteomes" id="UP000000437">
    <property type="component" value="Chromosome 1"/>
</dbReference>
<dbReference type="GO" id="GO:0005730">
    <property type="term" value="C:nucleolus"/>
    <property type="evidence" value="ECO:0007669"/>
    <property type="project" value="UniProtKB-SubCell"/>
</dbReference>
<dbReference type="GO" id="GO:0005654">
    <property type="term" value="C:nucleoplasm"/>
    <property type="evidence" value="ECO:0007669"/>
    <property type="project" value="UniProtKB-SubCell"/>
</dbReference>
<dbReference type="GO" id="GO:0005634">
    <property type="term" value="C:nucleus"/>
    <property type="evidence" value="ECO:0000318"/>
    <property type="project" value="GO_Central"/>
</dbReference>
<dbReference type="GO" id="GO:0033699">
    <property type="term" value="F:DNA 5'-adenosine monophosphate hydrolase activity"/>
    <property type="evidence" value="ECO:0000318"/>
    <property type="project" value="GO_Central"/>
</dbReference>
<dbReference type="GO" id="GO:0120108">
    <property type="term" value="F:DNA-3'-diphospho-5'-guanosine diphosphatase"/>
    <property type="evidence" value="ECO:0007669"/>
    <property type="project" value="UniProtKB-EC"/>
</dbReference>
<dbReference type="GO" id="GO:0003725">
    <property type="term" value="F:double-stranded RNA binding"/>
    <property type="evidence" value="ECO:0000318"/>
    <property type="project" value="GO_Central"/>
</dbReference>
<dbReference type="GO" id="GO:0030983">
    <property type="term" value="F:mismatched DNA binding"/>
    <property type="evidence" value="ECO:0000318"/>
    <property type="project" value="GO_Central"/>
</dbReference>
<dbReference type="GO" id="GO:1990165">
    <property type="term" value="F:single-strand break-containing DNA binding"/>
    <property type="evidence" value="ECO:0000318"/>
    <property type="project" value="GO_Central"/>
</dbReference>
<dbReference type="GO" id="GO:0003697">
    <property type="term" value="F:single-stranded DNA binding"/>
    <property type="evidence" value="ECO:0000318"/>
    <property type="project" value="GO_Central"/>
</dbReference>
<dbReference type="GO" id="GO:0008270">
    <property type="term" value="F:zinc ion binding"/>
    <property type="evidence" value="ECO:0007669"/>
    <property type="project" value="UniProtKB-KW"/>
</dbReference>
<dbReference type="GO" id="GO:0000012">
    <property type="term" value="P:single strand break repair"/>
    <property type="evidence" value="ECO:0000318"/>
    <property type="project" value="GO_Central"/>
</dbReference>
<dbReference type="CDD" id="cd01278">
    <property type="entry name" value="aprataxin_related"/>
    <property type="match status" value="1"/>
</dbReference>
<dbReference type="CDD" id="cd22735">
    <property type="entry name" value="FHA_APTX"/>
    <property type="match status" value="1"/>
</dbReference>
<dbReference type="FunFam" id="3.30.428.10:FF:000004">
    <property type="entry name" value="aprataxin isoform X2"/>
    <property type="match status" value="1"/>
</dbReference>
<dbReference type="FunFam" id="2.60.200.20:FF:000009">
    <property type="entry name" value="bifunctional polynucleotide phosphatase/kinase"/>
    <property type="match status" value="1"/>
</dbReference>
<dbReference type="Gene3D" id="2.60.200.20">
    <property type="match status" value="1"/>
</dbReference>
<dbReference type="Gene3D" id="3.30.428.10">
    <property type="entry name" value="HIT-like"/>
    <property type="match status" value="1"/>
</dbReference>
<dbReference type="InterPro" id="IPR041388">
    <property type="entry name" value="FHA_2"/>
</dbReference>
<dbReference type="InterPro" id="IPR047289">
    <property type="entry name" value="FHA_APTX"/>
</dbReference>
<dbReference type="InterPro" id="IPR019808">
    <property type="entry name" value="Histidine_triad_CS"/>
</dbReference>
<dbReference type="InterPro" id="IPR011146">
    <property type="entry name" value="HIT-like"/>
</dbReference>
<dbReference type="InterPro" id="IPR036265">
    <property type="entry name" value="HIT-like_sf"/>
</dbReference>
<dbReference type="InterPro" id="IPR008984">
    <property type="entry name" value="SMAD_FHA_dom_sf"/>
</dbReference>
<dbReference type="InterPro" id="IPR032566">
    <property type="entry name" value="Znf-C2HE"/>
</dbReference>
<dbReference type="InterPro" id="IPR013087">
    <property type="entry name" value="Znf_C2H2_type"/>
</dbReference>
<dbReference type="PANTHER" id="PTHR12486:SF4">
    <property type="entry name" value="APRATAXIN"/>
    <property type="match status" value="1"/>
</dbReference>
<dbReference type="PANTHER" id="PTHR12486">
    <property type="entry name" value="APRATAXIN-RELATED"/>
    <property type="match status" value="1"/>
</dbReference>
<dbReference type="Pfam" id="PF11969">
    <property type="entry name" value="DcpS_C"/>
    <property type="match status" value="1"/>
</dbReference>
<dbReference type="Pfam" id="PF17913">
    <property type="entry name" value="FHA_2"/>
    <property type="match status" value="1"/>
</dbReference>
<dbReference type="Pfam" id="PF16278">
    <property type="entry name" value="zf-C2HE"/>
    <property type="match status" value="1"/>
</dbReference>
<dbReference type="SUPFAM" id="SSF54197">
    <property type="entry name" value="HIT-like"/>
    <property type="match status" value="1"/>
</dbReference>
<dbReference type="SUPFAM" id="SSF49879">
    <property type="entry name" value="SMAD/FHA domain"/>
    <property type="match status" value="1"/>
</dbReference>
<dbReference type="PROSITE" id="PS00892">
    <property type="entry name" value="HIT_1"/>
    <property type="match status" value="1"/>
</dbReference>
<dbReference type="PROSITE" id="PS51084">
    <property type="entry name" value="HIT_2"/>
    <property type="match status" value="1"/>
</dbReference>
<dbReference type="PROSITE" id="PS50157">
    <property type="entry name" value="ZINC_FINGER_C2H2_2"/>
    <property type="match status" value="1"/>
</dbReference>
<name>APTX_DANRE</name>
<reference key="1">
    <citation type="submission" date="2003-01" db="EMBL/GenBank/DDBJ databases">
        <title>Cloning and sequence analysis of FHA-HIT in zebrafish.</title>
        <authorList>
            <person name="Huang C.-H."/>
        </authorList>
    </citation>
    <scope>NUCLEOTIDE SEQUENCE [MRNA]</scope>
</reference>
<organism>
    <name type="scientific">Danio rerio</name>
    <name type="common">Zebrafish</name>
    <name type="synonym">Brachydanio rerio</name>
    <dbReference type="NCBI Taxonomy" id="7955"/>
    <lineage>
        <taxon>Eukaryota</taxon>
        <taxon>Metazoa</taxon>
        <taxon>Chordata</taxon>
        <taxon>Craniata</taxon>
        <taxon>Vertebrata</taxon>
        <taxon>Euteleostomi</taxon>
        <taxon>Actinopterygii</taxon>
        <taxon>Neopterygii</taxon>
        <taxon>Teleostei</taxon>
        <taxon>Ostariophysi</taxon>
        <taxon>Cypriniformes</taxon>
        <taxon>Danionidae</taxon>
        <taxon>Danioninae</taxon>
        <taxon>Danio</taxon>
    </lineage>
</organism>
<feature type="chain" id="PRO_0000109844" description="Aprataxin">
    <location>
        <begin position="1"/>
        <end position="324"/>
    </location>
</feature>
<feature type="domain" description="FHA-like">
    <location>
        <begin position="23"/>
        <end position="72"/>
    </location>
</feature>
<feature type="domain" description="HIT" evidence="5">
    <location>
        <begin position="150"/>
        <end position="255"/>
    </location>
</feature>
<feature type="zinc finger region" description="C2H2-type" evidence="4">
    <location>
        <begin position="299"/>
        <end position="321"/>
    </location>
</feature>
<feature type="region of interest" description="Disordered" evidence="6">
    <location>
        <begin position="100"/>
        <end position="160"/>
    </location>
</feature>
<feature type="region of interest" description="Interaction with DNA substrate" evidence="3">
    <location>
        <begin position="175"/>
        <end position="179"/>
    </location>
</feature>
<feature type="region of interest" description="Interaction with DNA substrate" evidence="3">
    <location>
        <begin position="237"/>
        <end position="238"/>
    </location>
</feature>
<feature type="short sequence motif" description="Histidine triad motif">
    <location>
        <begin position="240"/>
        <end position="244"/>
    </location>
</feature>
<feature type="compositionally biased region" description="Polar residues" evidence="6">
    <location>
        <begin position="111"/>
        <end position="125"/>
    </location>
</feature>
<feature type="active site" description="Tele-AMP-histidine intermediate" evidence="3">
    <location>
        <position position="242"/>
    </location>
</feature>
<feature type="site" description="Interaction with DNA substrate" evidence="3">
    <location>
        <position position="156"/>
    </location>
</feature>
<feature type="site" description="Interaction with DNA substrate" evidence="3">
    <location>
        <position position="233"/>
    </location>
</feature>
<feature type="site" description="Interaction with DNA substrate" evidence="3">
    <location>
        <position position="244"/>
    </location>
</feature>
<feature type="site" description="Interaction with DNA substrate" evidence="3">
    <location>
        <position position="259"/>
    </location>
</feature>
<comment type="function">
    <text evidence="2 3">DNA-binding protein involved in single-strand DNA break repair, double-strand DNA break repair and base excision repair. Resolves abortive DNA ligation intermediates formed either at base excision sites, or when DNA ligases attempt to repair non-ligatable breaks induced by reactive oxygen species. Catalyzes the release of adenylate groups covalently linked to 5'-phosphate termini, resulting in the production of 5'-phosphate termini that can be efficiently rejoined. Also able to hydrolyze adenosine 5'-monophosphoramidate (AMP-NH(2)) and diadenosine tetraphosphate (AppppA), but with lower catalytic activity (By similarity). Likewise, catalyzes the release of 3'-linked guanosine (DNAppG) and inosine (DNAppI) from DNA, but has higher specific activity with 5'-linked adenosine (AppDNA) (By similarity).</text>
</comment>
<comment type="catalytic activity">
    <reaction evidence="3">
        <text>a 5'-end adenosine-5'-diphospho-5'-2'-deoxyribonucleoside-DNA + H2O = a 5'-end 5'-phospho-2'-deoxyribonucleoside-DNA + AMP + 2 H(+)</text>
        <dbReference type="Rhea" id="RHEA:52128"/>
        <dbReference type="Rhea" id="RHEA-COMP:13180"/>
        <dbReference type="Rhea" id="RHEA-COMP:13181"/>
        <dbReference type="ChEBI" id="CHEBI:15377"/>
        <dbReference type="ChEBI" id="CHEBI:15378"/>
        <dbReference type="ChEBI" id="CHEBI:136412"/>
        <dbReference type="ChEBI" id="CHEBI:136413"/>
        <dbReference type="ChEBI" id="CHEBI:456215"/>
        <dbReference type="EC" id="3.6.1.71"/>
    </reaction>
</comment>
<comment type="catalytic activity">
    <reaction evidence="3">
        <text>a 5'-end adenosine-5'-diphospho-5'-ribonucleoside-2'-deoxyribonucleotide-DNA + H2O = a 5'-end 5'-phospho-ribonucleoside-2'-deoxyribonucleotide-DNA + AMP + 2 H(+)</text>
        <dbReference type="Rhea" id="RHEA:52132"/>
        <dbReference type="Rhea" id="RHEA-COMP:13182"/>
        <dbReference type="Rhea" id="RHEA-COMP:13183"/>
        <dbReference type="ChEBI" id="CHEBI:15377"/>
        <dbReference type="ChEBI" id="CHEBI:15378"/>
        <dbReference type="ChEBI" id="CHEBI:136414"/>
        <dbReference type="ChEBI" id="CHEBI:136415"/>
        <dbReference type="ChEBI" id="CHEBI:456215"/>
        <dbReference type="EC" id="3.6.1.71"/>
    </reaction>
</comment>
<comment type="catalytic activity">
    <reaction evidence="2">
        <text>a 3'-end 2'-deoxyribonucleotide-3'-diphospho-5'-guanosine-DNA + H2O = a 3'-end 2'-deoxyribonucleotide 3'-phosphate-DNA + GMP + 2 H(+)</text>
        <dbReference type="Rhea" id="RHEA:52140"/>
        <dbReference type="Rhea" id="RHEA-COMP:13186"/>
        <dbReference type="Rhea" id="RHEA-COMP:13187"/>
        <dbReference type="ChEBI" id="CHEBI:15377"/>
        <dbReference type="ChEBI" id="CHEBI:15378"/>
        <dbReference type="ChEBI" id="CHEBI:58115"/>
        <dbReference type="ChEBI" id="CHEBI:136419"/>
        <dbReference type="ChEBI" id="CHEBI:136420"/>
        <dbReference type="EC" id="3.6.1.72"/>
    </reaction>
</comment>
<comment type="subcellular location">
    <subcellularLocation>
        <location evidence="3">Nucleus</location>
        <location evidence="3">Nucleoplasm</location>
    </subcellularLocation>
    <subcellularLocation>
        <location evidence="3">Nucleus</location>
        <location evidence="3">Nucleolus</location>
    </subcellularLocation>
</comment>
<comment type="domain">
    <text evidence="3">The histidine triad, also called HIT motif, forms part of the binding loop for the alpha-phosphate of purine mononucleotide.</text>
</comment>
<comment type="domain">
    <text evidence="1">The HIT domain is required for enzymatic activity.</text>
</comment>
<comment type="domain">
    <text evidence="1">The C2H2-type zinc finger mediates DNA-binding.</text>
</comment>
<protein>
    <recommendedName>
        <fullName>Aprataxin</fullName>
        <ecNumber evidence="3">3.6.1.71</ecNumber>
        <ecNumber evidence="2">3.6.1.72</ecNumber>
    </recommendedName>
    <alternativeName>
        <fullName>Forkhead-associated domain histidine triad-like protein</fullName>
        <shortName>FHA-HIT</shortName>
    </alternativeName>
</protein>
<keyword id="KW-0227">DNA damage</keyword>
<keyword id="KW-0234">DNA repair</keyword>
<keyword id="KW-0238">DNA-binding</keyword>
<keyword id="KW-0378">Hydrolase</keyword>
<keyword id="KW-0479">Metal-binding</keyword>
<keyword id="KW-0539">Nucleus</keyword>
<keyword id="KW-1185">Reference proteome</keyword>
<keyword id="KW-0862">Zinc</keyword>
<keyword id="KW-0863">Zinc-finger</keyword>
<sequence length="324" mass="36522">MPVCLLVSEDNSHKPIELHHQQSVTLGRGPDTKIKDKKCSREQVELRADCNRGFVTVKQLGVNPTLVDDVVVGKGNQVSIKPGQSLYMVNQQYPYSVKFTEDTSRSKPSKRAQQIQSPTKTTADVSDSPPPPKKTTPPAGEKSESAGHWSQGLKASMQDPKMQVYKDDSVVVIKDKYPKARYHWLVLPWQSISSLKALRSEHVELLKHMQRVADQMVEQCPDAHKLSFRLGYHAIPSMSHVHLHVISQDFDSPCLKNKKHWNSFTTDYFVESQDVISMLEHDGKVQVKEGAGELLKLPLRCHVCGKEQTTIPKLKDHLKTHLPS</sequence>
<proteinExistence type="evidence at transcript level"/>